<name>PUR5_SYNS3</name>
<gene>
    <name evidence="1" type="primary">purM</name>
    <name type="ordered locus">sync_0481</name>
</gene>
<feature type="chain" id="PRO_1000046481" description="Phosphoribosylformylglycinamidine cyclo-ligase">
    <location>
        <begin position="1"/>
        <end position="346"/>
    </location>
</feature>
<keyword id="KW-0067">ATP-binding</keyword>
<keyword id="KW-0963">Cytoplasm</keyword>
<keyword id="KW-0436">Ligase</keyword>
<keyword id="KW-0547">Nucleotide-binding</keyword>
<keyword id="KW-0658">Purine biosynthesis</keyword>
<keyword id="KW-1185">Reference proteome</keyword>
<organism>
    <name type="scientific">Synechococcus sp. (strain CC9311)</name>
    <dbReference type="NCBI Taxonomy" id="64471"/>
    <lineage>
        <taxon>Bacteria</taxon>
        <taxon>Bacillati</taxon>
        <taxon>Cyanobacteriota</taxon>
        <taxon>Cyanophyceae</taxon>
        <taxon>Synechococcales</taxon>
        <taxon>Synechococcaceae</taxon>
        <taxon>Synechococcus</taxon>
    </lineage>
</organism>
<proteinExistence type="inferred from homology"/>
<protein>
    <recommendedName>
        <fullName evidence="1">Phosphoribosylformylglycinamidine cyclo-ligase</fullName>
        <ecNumber evidence="1">6.3.3.1</ecNumber>
    </recommendedName>
    <alternativeName>
        <fullName evidence="1">AIR synthase</fullName>
    </alternativeName>
    <alternativeName>
        <fullName evidence="1">AIRS</fullName>
    </alternativeName>
    <alternativeName>
        <fullName evidence="1">Phosphoribosyl-aminoimidazole synthetase</fullName>
    </alternativeName>
</protein>
<accession>Q0ICW4</accession>
<sequence length="346" mass="36298">MDYKTAGVDVEAGRAFVNRIRKSVEATHRPEVVGGLGGFGGLMRLPAGLKKPLLVSGTDGVGTKLELAQDHGGHHNVGIDLVAMCVNDVITSGAEPLFFLDYMATGALSPEAMATVVEGIAEGCRGSGCALLGGETAEMPGFYPSGRYDLAGFCVAVVEEEQLIDGRQIRAGDRILGIASSGIHSNGFSLVRRVLTHAGANAETTFGPSNQPLIESLLTPTQLYGRLVKTLLETGTPIHGMAHITGGGLPENLPRCLPEGLQAIVTPSSWTRPAIYDWLQSHGDIPERDLWHTFNLGIGYCLIVPEEGVSIAEKACESEGMQAWTIGRIEASSGGDGKGSVLGLPA</sequence>
<evidence type="ECO:0000255" key="1">
    <source>
        <dbReference type="HAMAP-Rule" id="MF_00741"/>
    </source>
</evidence>
<dbReference type="EC" id="6.3.3.1" evidence="1"/>
<dbReference type="EMBL" id="CP000435">
    <property type="protein sequence ID" value="ABI47623.1"/>
    <property type="molecule type" value="Genomic_DNA"/>
</dbReference>
<dbReference type="RefSeq" id="WP_011618440.1">
    <property type="nucleotide sequence ID" value="NC_008319.1"/>
</dbReference>
<dbReference type="SMR" id="Q0ICW4"/>
<dbReference type="STRING" id="64471.sync_0481"/>
<dbReference type="KEGG" id="syg:sync_0481"/>
<dbReference type="eggNOG" id="COG0150">
    <property type="taxonomic scope" value="Bacteria"/>
</dbReference>
<dbReference type="HOGENOM" id="CLU_047116_0_0_3"/>
<dbReference type="OrthoDB" id="9802507at2"/>
<dbReference type="UniPathway" id="UPA00074">
    <property type="reaction ID" value="UER00129"/>
</dbReference>
<dbReference type="Proteomes" id="UP000001961">
    <property type="component" value="Chromosome"/>
</dbReference>
<dbReference type="GO" id="GO:0005829">
    <property type="term" value="C:cytosol"/>
    <property type="evidence" value="ECO:0007669"/>
    <property type="project" value="TreeGrafter"/>
</dbReference>
<dbReference type="GO" id="GO:0005524">
    <property type="term" value="F:ATP binding"/>
    <property type="evidence" value="ECO:0007669"/>
    <property type="project" value="UniProtKB-KW"/>
</dbReference>
<dbReference type="GO" id="GO:0004637">
    <property type="term" value="F:phosphoribosylamine-glycine ligase activity"/>
    <property type="evidence" value="ECO:0007669"/>
    <property type="project" value="TreeGrafter"/>
</dbReference>
<dbReference type="GO" id="GO:0004641">
    <property type="term" value="F:phosphoribosylformylglycinamidine cyclo-ligase activity"/>
    <property type="evidence" value="ECO:0007669"/>
    <property type="project" value="UniProtKB-UniRule"/>
</dbReference>
<dbReference type="GO" id="GO:0006189">
    <property type="term" value="P:'de novo' IMP biosynthetic process"/>
    <property type="evidence" value="ECO:0007669"/>
    <property type="project" value="UniProtKB-UniRule"/>
</dbReference>
<dbReference type="GO" id="GO:0046084">
    <property type="term" value="P:adenine biosynthetic process"/>
    <property type="evidence" value="ECO:0007669"/>
    <property type="project" value="TreeGrafter"/>
</dbReference>
<dbReference type="CDD" id="cd02196">
    <property type="entry name" value="PurM"/>
    <property type="match status" value="1"/>
</dbReference>
<dbReference type="FunFam" id="3.30.1330.10:FF:000001">
    <property type="entry name" value="Phosphoribosylformylglycinamidine cyclo-ligase"/>
    <property type="match status" value="1"/>
</dbReference>
<dbReference type="FunFam" id="3.90.650.10:FF:000011">
    <property type="entry name" value="Phosphoribosylformylglycinamidine cyclo-ligase"/>
    <property type="match status" value="1"/>
</dbReference>
<dbReference type="Gene3D" id="3.90.650.10">
    <property type="entry name" value="PurM-like C-terminal domain"/>
    <property type="match status" value="1"/>
</dbReference>
<dbReference type="Gene3D" id="3.30.1330.10">
    <property type="entry name" value="PurM-like, N-terminal domain"/>
    <property type="match status" value="1"/>
</dbReference>
<dbReference type="HAMAP" id="MF_00741">
    <property type="entry name" value="AIRS"/>
    <property type="match status" value="1"/>
</dbReference>
<dbReference type="InterPro" id="IPR010918">
    <property type="entry name" value="PurM-like_C_dom"/>
</dbReference>
<dbReference type="InterPro" id="IPR036676">
    <property type="entry name" value="PurM-like_C_sf"/>
</dbReference>
<dbReference type="InterPro" id="IPR016188">
    <property type="entry name" value="PurM-like_N"/>
</dbReference>
<dbReference type="InterPro" id="IPR036921">
    <property type="entry name" value="PurM-like_N_sf"/>
</dbReference>
<dbReference type="InterPro" id="IPR004733">
    <property type="entry name" value="PurM_cligase"/>
</dbReference>
<dbReference type="NCBIfam" id="TIGR00878">
    <property type="entry name" value="purM"/>
    <property type="match status" value="1"/>
</dbReference>
<dbReference type="PANTHER" id="PTHR10520:SF12">
    <property type="entry name" value="TRIFUNCTIONAL PURINE BIOSYNTHETIC PROTEIN ADENOSINE-3"/>
    <property type="match status" value="1"/>
</dbReference>
<dbReference type="PANTHER" id="PTHR10520">
    <property type="entry name" value="TRIFUNCTIONAL PURINE BIOSYNTHETIC PROTEIN ADENOSINE-3-RELATED"/>
    <property type="match status" value="1"/>
</dbReference>
<dbReference type="Pfam" id="PF00586">
    <property type="entry name" value="AIRS"/>
    <property type="match status" value="1"/>
</dbReference>
<dbReference type="Pfam" id="PF02769">
    <property type="entry name" value="AIRS_C"/>
    <property type="match status" value="1"/>
</dbReference>
<dbReference type="SUPFAM" id="SSF56042">
    <property type="entry name" value="PurM C-terminal domain-like"/>
    <property type="match status" value="1"/>
</dbReference>
<dbReference type="SUPFAM" id="SSF55326">
    <property type="entry name" value="PurM N-terminal domain-like"/>
    <property type="match status" value="1"/>
</dbReference>
<reference key="1">
    <citation type="journal article" date="2006" name="Proc. Natl. Acad. Sci. U.S.A.">
        <title>Genome sequence of Synechococcus CC9311: insights into adaptation to a coastal environment.</title>
        <authorList>
            <person name="Palenik B."/>
            <person name="Ren Q."/>
            <person name="Dupont C.L."/>
            <person name="Myers G.S."/>
            <person name="Heidelberg J.F."/>
            <person name="Badger J.H."/>
            <person name="Madupu R."/>
            <person name="Nelson W.C."/>
            <person name="Brinkac L.M."/>
            <person name="Dodson R.J."/>
            <person name="Durkin A.S."/>
            <person name="Daugherty S.C."/>
            <person name="Sullivan S.A."/>
            <person name="Khouri H."/>
            <person name="Mohamoud Y."/>
            <person name="Halpin R."/>
            <person name="Paulsen I.T."/>
        </authorList>
    </citation>
    <scope>NUCLEOTIDE SEQUENCE [LARGE SCALE GENOMIC DNA]</scope>
    <source>
        <strain>CC9311</strain>
    </source>
</reference>
<comment type="catalytic activity">
    <reaction evidence="1">
        <text>2-formamido-N(1)-(5-O-phospho-beta-D-ribosyl)acetamidine + ATP = 5-amino-1-(5-phospho-beta-D-ribosyl)imidazole + ADP + phosphate + H(+)</text>
        <dbReference type="Rhea" id="RHEA:23032"/>
        <dbReference type="ChEBI" id="CHEBI:15378"/>
        <dbReference type="ChEBI" id="CHEBI:30616"/>
        <dbReference type="ChEBI" id="CHEBI:43474"/>
        <dbReference type="ChEBI" id="CHEBI:137981"/>
        <dbReference type="ChEBI" id="CHEBI:147287"/>
        <dbReference type="ChEBI" id="CHEBI:456216"/>
        <dbReference type="EC" id="6.3.3.1"/>
    </reaction>
</comment>
<comment type="pathway">
    <text evidence="1">Purine metabolism; IMP biosynthesis via de novo pathway; 5-amino-1-(5-phospho-D-ribosyl)imidazole from N(2)-formyl-N(1)-(5-phospho-D-ribosyl)glycinamide: step 2/2.</text>
</comment>
<comment type="subcellular location">
    <subcellularLocation>
        <location evidence="1">Cytoplasm</location>
    </subcellularLocation>
</comment>
<comment type="similarity">
    <text evidence="1">Belongs to the AIR synthase family.</text>
</comment>